<name>ARNC_SHIBS</name>
<sequence>MFEIHPVKKVSVVIPVYNEQESLPELIRRTTTACESLGKEYEILLIDDGSSDNSAHMLVEASQAENSHIVSILLNRNYGQHSAIMAGFSHVTGDLIITLDADLQNPPEEIPRLVAKADEGYDVVGTVRQNRQDSWFRKTASKMINRLIQRTTGKAMGDYGCMLRAYRRHIVDAMLHCHERSTFIPILANIFARRAIEIPVHHAEREFGESKYSFMRLINLMYDLVTCLTTTPLRMLSLLGSIIAIGGFSIAVLLVILRLTFGPQWAAEGVFMLFAVLFTFIGAQFIGMGLLGEYIGRIYTDVRARPRYFVQQVIRPSSKENE</sequence>
<dbReference type="EC" id="2.4.2.53" evidence="1"/>
<dbReference type="EMBL" id="CP000036">
    <property type="protein sequence ID" value="ABB66855.1"/>
    <property type="molecule type" value="Genomic_DNA"/>
</dbReference>
<dbReference type="RefSeq" id="WP_000461657.1">
    <property type="nucleotide sequence ID" value="NC_007613.1"/>
</dbReference>
<dbReference type="SMR" id="Q31YK3"/>
<dbReference type="CAZy" id="GT2">
    <property type="family name" value="Glycosyltransferase Family 2"/>
</dbReference>
<dbReference type="GeneID" id="93774920"/>
<dbReference type="KEGG" id="sbo:SBO_2291"/>
<dbReference type="HOGENOM" id="CLU_033536_0_0_6"/>
<dbReference type="UniPathway" id="UPA00030"/>
<dbReference type="UniPathway" id="UPA00036">
    <property type="reaction ID" value="UER00495"/>
</dbReference>
<dbReference type="Proteomes" id="UP000007067">
    <property type="component" value="Chromosome"/>
</dbReference>
<dbReference type="GO" id="GO:0005886">
    <property type="term" value="C:plasma membrane"/>
    <property type="evidence" value="ECO:0007669"/>
    <property type="project" value="UniProtKB-SubCell"/>
</dbReference>
<dbReference type="GO" id="GO:0016780">
    <property type="term" value="F:phosphotransferase activity, for other substituted phosphate groups"/>
    <property type="evidence" value="ECO:0007669"/>
    <property type="project" value="UniProtKB-UniRule"/>
</dbReference>
<dbReference type="GO" id="GO:0099621">
    <property type="term" value="F:undecaprenyl-phosphate 4-deoxy-4-formamido-L-arabinose transferase activity"/>
    <property type="evidence" value="ECO:0007669"/>
    <property type="project" value="UniProtKB-EC"/>
</dbReference>
<dbReference type="GO" id="GO:0036108">
    <property type="term" value="P:4-amino-4-deoxy-alpha-L-arabinopyranosyl undecaprenyl phosphate biosynthetic process"/>
    <property type="evidence" value="ECO:0007669"/>
    <property type="project" value="UniProtKB-UniRule"/>
</dbReference>
<dbReference type="GO" id="GO:0009245">
    <property type="term" value="P:lipid A biosynthetic process"/>
    <property type="evidence" value="ECO:0007669"/>
    <property type="project" value="UniProtKB-UniRule"/>
</dbReference>
<dbReference type="GO" id="GO:0009103">
    <property type="term" value="P:lipopolysaccharide biosynthetic process"/>
    <property type="evidence" value="ECO:0007669"/>
    <property type="project" value="UniProtKB-UniRule"/>
</dbReference>
<dbReference type="GO" id="GO:0046677">
    <property type="term" value="P:response to antibiotic"/>
    <property type="evidence" value="ECO:0007669"/>
    <property type="project" value="UniProtKB-KW"/>
</dbReference>
<dbReference type="CDD" id="cd04187">
    <property type="entry name" value="DPM1_like_bac"/>
    <property type="match status" value="1"/>
</dbReference>
<dbReference type="FunFam" id="3.90.550.10:FF:000019">
    <property type="entry name" value="Undecaprenyl-phosphate 4-deoxy-4-formamido-L-arabinose transferase"/>
    <property type="match status" value="1"/>
</dbReference>
<dbReference type="Gene3D" id="3.90.550.10">
    <property type="entry name" value="Spore Coat Polysaccharide Biosynthesis Protein SpsA, Chain A"/>
    <property type="match status" value="1"/>
</dbReference>
<dbReference type="HAMAP" id="MF_01164">
    <property type="entry name" value="ArnC_transfer"/>
    <property type="match status" value="1"/>
</dbReference>
<dbReference type="InterPro" id="IPR022857">
    <property type="entry name" value="ArnC_tfrase"/>
</dbReference>
<dbReference type="InterPro" id="IPR001173">
    <property type="entry name" value="Glyco_trans_2-like"/>
</dbReference>
<dbReference type="InterPro" id="IPR050256">
    <property type="entry name" value="Glycosyltransferase_2"/>
</dbReference>
<dbReference type="InterPro" id="IPR029044">
    <property type="entry name" value="Nucleotide-diphossugar_trans"/>
</dbReference>
<dbReference type="NCBIfam" id="NF007986">
    <property type="entry name" value="PRK10714.1"/>
    <property type="match status" value="1"/>
</dbReference>
<dbReference type="PANTHER" id="PTHR48090:SF3">
    <property type="entry name" value="UNDECAPRENYL-PHOSPHATE 4-DEOXY-4-FORMAMIDO-L-ARABINOSE TRANSFERASE"/>
    <property type="match status" value="1"/>
</dbReference>
<dbReference type="PANTHER" id="PTHR48090">
    <property type="entry name" value="UNDECAPRENYL-PHOSPHATE 4-DEOXY-4-FORMAMIDO-L-ARABINOSE TRANSFERASE-RELATED"/>
    <property type="match status" value="1"/>
</dbReference>
<dbReference type="Pfam" id="PF00535">
    <property type="entry name" value="Glycos_transf_2"/>
    <property type="match status" value="1"/>
</dbReference>
<dbReference type="SUPFAM" id="SSF53448">
    <property type="entry name" value="Nucleotide-diphospho-sugar transferases"/>
    <property type="match status" value="1"/>
</dbReference>
<keyword id="KW-0046">Antibiotic resistance</keyword>
<keyword id="KW-0997">Cell inner membrane</keyword>
<keyword id="KW-1003">Cell membrane</keyword>
<keyword id="KW-0328">Glycosyltransferase</keyword>
<keyword id="KW-0441">Lipid A biosynthesis</keyword>
<keyword id="KW-0444">Lipid biosynthesis</keyword>
<keyword id="KW-0443">Lipid metabolism</keyword>
<keyword id="KW-0448">Lipopolysaccharide biosynthesis</keyword>
<keyword id="KW-0472">Membrane</keyword>
<keyword id="KW-0808">Transferase</keyword>
<keyword id="KW-0812">Transmembrane</keyword>
<keyword id="KW-1133">Transmembrane helix</keyword>
<protein>
    <recommendedName>
        <fullName evidence="1">Undecaprenyl-phosphate 4-deoxy-4-formamido-L-arabinose transferase</fullName>
        <ecNumber evidence="1">2.4.2.53</ecNumber>
    </recommendedName>
    <alternativeName>
        <fullName evidence="1">Undecaprenyl-phosphate Ara4FN transferase</fullName>
        <shortName evidence="1">Ara4FN transferase</shortName>
    </alternativeName>
</protein>
<feature type="chain" id="PRO_1000065657" description="Undecaprenyl-phosphate 4-deoxy-4-formamido-L-arabinose transferase">
    <location>
        <begin position="1"/>
        <end position="322"/>
    </location>
</feature>
<feature type="topological domain" description="Cytoplasmic" evidence="1">
    <location>
        <begin position="1"/>
        <end position="235"/>
    </location>
</feature>
<feature type="transmembrane region" description="Helical" evidence="1">
    <location>
        <begin position="236"/>
        <end position="256"/>
    </location>
</feature>
<feature type="topological domain" description="Periplasmic" evidence="1">
    <location>
        <begin position="257"/>
        <end position="269"/>
    </location>
</feature>
<feature type="transmembrane region" description="Helical" evidence="1">
    <location>
        <begin position="270"/>
        <end position="290"/>
    </location>
</feature>
<feature type="topological domain" description="Cytoplasmic" evidence="1">
    <location>
        <begin position="291"/>
        <end position="322"/>
    </location>
</feature>
<evidence type="ECO:0000255" key="1">
    <source>
        <dbReference type="HAMAP-Rule" id="MF_01164"/>
    </source>
</evidence>
<organism>
    <name type="scientific">Shigella boydii serotype 4 (strain Sb227)</name>
    <dbReference type="NCBI Taxonomy" id="300268"/>
    <lineage>
        <taxon>Bacteria</taxon>
        <taxon>Pseudomonadati</taxon>
        <taxon>Pseudomonadota</taxon>
        <taxon>Gammaproteobacteria</taxon>
        <taxon>Enterobacterales</taxon>
        <taxon>Enterobacteriaceae</taxon>
        <taxon>Shigella</taxon>
    </lineage>
</organism>
<gene>
    <name evidence="1" type="primary">arnC</name>
    <name type="ordered locus">SBO_2291</name>
</gene>
<comment type="function">
    <text evidence="1">Catalyzes the transfer of 4-deoxy-4-formamido-L-arabinose from UDP to undecaprenyl phosphate. The modified arabinose is attached to lipid A and is required for resistance to polymyxin and cationic antimicrobial peptides.</text>
</comment>
<comment type="catalytic activity">
    <reaction evidence="1">
        <text>UDP-4-deoxy-4-formamido-beta-L-arabinose + di-trans,octa-cis-undecaprenyl phosphate = 4-deoxy-4-formamido-alpha-L-arabinopyranosyl di-trans,octa-cis-undecaprenyl phosphate + UDP</text>
        <dbReference type="Rhea" id="RHEA:27722"/>
        <dbReference type="ChEBI" id="CHEBI:58223"/>
        <dbReference type="ChEBI" id="CHEBI:58709"/>
        <dbReference type="ChEBI" id="CHEBI:58909"/>
        <dbReference type="ChEBI" id="CHEBI:60392"/>
        <dbReference type="EC" id="2.4.2.53"/>
    </reaction>
</comment>
<comment type="pathway">
    <text evidence="1">Glycolipid biosynthesis; 4-amino-4-deoxy-alpha-L-arabinose undecaprenyl phosphate biosynthesis; 4-amino-4-deoxy-alpha-L-arabinose undecaprenyl phosphate from UDP-4-deoxy-4-formamido-beta-L-arabinose and undecaprenyl phosphate: step 1/2.</text>
</comment>
<comment type="pathway">
    <text evidence="1">Bacterial outer membrane biogenesis; lipopolysaccharide biosynthesis.</text>
</comment>
<comment type="subcellular location">
    <subcellularLocation>
        <location evidence="1">Cell inner membrane</location>
        <topology evidence="1">Multi-pass membrane protein</topology>
    </subcellularLocation>
</comment>
<comment type="similarity">
    <text evidence="1">Belongs to the glycosyltransferase 2 family.</text>
</comment>
<accession>Q31YK3</accession>
<reference key="1">
    <citation type="journal article" date="2005" name="Nucleic Acids Res.">
        <title>Genome dynamics and diversity of Shigella species, the etiologic agents of bacillary dysentery.</title>
        <authorList>
            <person name="Yang F."/>
            <person name="Yang J."/>
            <person name="Zhang X."/>
            <person name="Chen L."/>
            <person name="Jiang Y."/>
            <person name="Yan Y."/>
            <person name="Tang X."/>
            <person name="Wang J."/>
            <person name="Xiong Z."/>
            <person name="Dong J."/>
            <person name="Xue Y."/>
            <person name="Zhu Y."/>
            <person name="Xu X."/>
            <person name="Sun L."/>
            <person name="Chen S."/>
            <person name="Nie H."/>
            <person name="Peng J."/>
            <person name="Xu J."/>
            <person name="Wang Y."/>
            <person name="Yuan Z."/>
            <person name="Wen Y."/>
            <person name="Yao Z."/>
            <person name="Shen Y."/>
            <person name="Qiang B."/>
            <person name="Hou Y."/>
            <person name="Yu J."/>
            <person name="Jin Q."/>
        </authorList>
    </citation>
    <scope>NUCLEOTIDE SEQUENCE [LARGE SCALE GENOMIC DNA]</scope>
    <source>
        <strain>Sb227</strain>
    </source>
</reference>
<proteinExistence type="inferred from homology"/>